<gene>
    <name evidence="1" type="primary">argC</name>
    <name type="ordered locus">DIP1167</name>
</gene>
<sequence length="347" mass="36437">MNIKVAIVGASGYAGGEILRLLLQHPLYLSGQLSIGALMGSSTVGQTVSELMPHLPELSDRVVEPTDVETLKSHDVVFLALPHGFSAEIAQQLPAEITVIDCAADFRLKDQKDWDAYYGGKHAGSWPYGIPEMPGHRDLIASSKRIAVPGCFPTGATLALLPAIAAHIIEPDVSVVSITGVSGAGKKASVAMLGAETMGSLKAYNVAGKHRHTPEISQNLSEYADQKIVVSFTPVLAPLPRGILTTATAKLTSGITLDEIREIYLNAYENEPFVHILPSGQQPQTQAVVGSNMCHIQVDADDNSKKLVVTSAIDNLTKGTAGAAVQCMNLSLGVSETSGLPCGGVAP</sequence>
<evidence type="ECO:0000255" key="1">
    <source>
        <dbReference type="HAMAP-Rule" id="MF_00150"/>
    </source>
</evidence>
<dbReference type="EC" id="1.2.1.38" evidence="1"/>
<dbReference type="EMBL" id="BX248357">
    <property type="protein sequence ID" value="CAE49687.1"/>
    <property type="molecule type" value="Genomic_DNA"/>
</dbReference>
<dbReference type="RefSeq" id="WP_010934855.1">
    <property type="nucleotide sequence ID" value="NC_002935.2"/>
</dbReference>
<dbReference type="SMR" id="Q6NHH0"/>
<dbReference type="STRING" id="257309.DIP1167"/>
<dbReference type="KEGG" id="cdi:DIP1167"/>
<dbReference type="HOGENOM" id="CLU_006384_0_0_11"/>
<dbReference type="UniPathway" id="UPA00068">
    <property type="reaction ID" value="UER00108"/>
</dbReference>
<dbReference type="Proteomes" id="UP000002198">
    <property type="component" value="Chromosome"/>
</dbReference>
<dbReference type="GO" id="GO:0005737">
    <property type="term" value="C:cytoplasm"/>
    <property type="evidence" value="ECO:0007669"/>
    <property type="project" value="UniProtKB-SubCell"/>
</dbReference>
<dbReference type="GO" id="GO:0003942">
    <property type="term" value="F:N-acetyl-gamma-glutamyl-phosphate reductase activity"/>
    <property type="evidence" value="ECO:0007669"/>
    <property type="project" value="UniProtKB-UniRule"/>
</dbReference>
<dbReference type="GO" id="GO:0051287">
    <property type="term" value="F:NAD binding"/>
    <property type="evidence" value="ECO:0007669"/>
    <property type="project" value="InterPro"/>
</dbReference>
<dbReference type="GO" id="GO:0070401">
    <property type="term" value="F:NADP+ binding"/>
    <property type="evidence" value="ECO:0007669"/>
    <property type="project" value="InterPro"/>
</dbReference>
<dbReference type="GO" id="GO:0006526">
    <property type="term" value="P:L-arginine biosynthetic process"/>
    <property type="evidence" value="ECO:0007669"/>
    <property type="project" value="UniProtKB-UniRule"/>
</dbReference>
<dbReference type="CDD" id="cd24148">
    <property type="entry name" value="AGPR_1_actinobacAGPR_like"/>
    <property type="match status" value="1"/>
</dbReference>
<dbReference type="CDD" id="cd23934">
    <property type="entry name" value="AGPR_1_C"/>
    <property type="match status" value="1"/>
</dbReference>
<dbReference type="FunFam" id="3.30.360.10:FF:000014">
    <property type="entry name" value="N-acetyl-gamma-glutamyl-phosphate reductase"/>
    <property type="match status" value="1"/>
</dbReference>
<dbReference type="Gene3D" id="3.30.360.10">
    <property type="entry name" value="Dihydrodipicolinate Reductase, domain 2"/>
    <property type="match status" value="1"/>
</dbReference>
<dbReference type="Gene3D" id="3.40.50.720">
    <property type="entry name" value="NAD(P)-binding Rossmann-like Domain"/>
    <property type="match status" value="1"/>
</dbReference>
<dbReference type="HAMAP" id="MF_00150">
    <property type="entry name" value="ArgC_type1"/>
    <property type="match status" value="1"/>
</dbReference>
<dbReference type="InterPro" id="IPR023013">
    <property type="entry name" value="AGPR_AS"/>
</dbReference>
<dbReference type="InterPro" id="IPR000706">
    <property type="entry name" value="AGPR_type-1"/>
</dbReference>
<dbReference type="InterPro" id="IPR036291">
    <property type="entry name" value="NAD(P)-bd_dom_sf"/>
</dbReference>
<dbReference type="InterPro" id="IPR050085">
    <property type="entry name" value="NAGSA_dehydrogenase"/>
</dbReference>
<dbReference type="InterPro" id="IPR000534">
    <property type="entry name" value="Semialdehyde_DH_NAD-bd"/>
</dbReference>
<dbReference type="NCBIfam" id="TIGR01850">
    <property type="entry name" value="argC"/>
    <property type="match status" value="1"/>
</dbReference>
<dbReference type="PANTHER" id="PTHR32338:SF10">
    <property type="entry name" value="N-ACETYL-GAMMA-GLUTAMYL-PHOSPHATE REDUCTASE, CHLOROPLASTIC-RELATED"/>
    <property type="match status" value="1"/>
</dbReference>
<dbReference type="PANTHER" id="PTHR32338">
    <property type="entry name" value="N-ACETYL-GAMMA-GLUTAMYL-PHOSPHATE REDUCTASE, CHLOROPLASTIC-RELATED-RELATED"/>
    <property type="match status" value="1"/>
</dbReference>
<dbReference type="Pfam" id="PF01118">
    <property type="entry name" value="Semialdhyde_dh"/>
    <property type="match status" value="1"/>
</dbReference>
<dbReference type="Pfam" id="PF22698">
    <property type="entry name" value="Semialdhyde_dhC_1"/>
    <property type="match status" value="1"/>
</dbReference>
<dbReference type="SMART" id="SM00859">
    <property type="entry name" value="Semialdhyde_dh"/>
    <property type="match status" value="1"/>
</dbReference>
<dbReference type="SUPFAM" id="SSF55347">
    <property type="entry name" value="Glyceraldehyde-3-phosphate dehydrogenase-like, C-terminal domain"/>
    <property type="match status" value="1"/>
</dbReference>
<dbReference type="SUPFAM" id="SSF51735">
    <property type="entry name" value="NAD(P)-binding Rossmann-fold domains"/>
    <property type="match status" value="1"/>
</dbReference>
<dbReference type="PROSITE" id="PS01224">
    <property type="entry name" value="ARGC"/>
    <property type="match status" value="1"/>
</dbReference>
<name>ARGC_CORDI</name>
<comment type="function">
    <text evidence="1">Catalyzes the NADPH-dependent reduction of N-acetyl-5-glutamyl phosphate to yield N-acetyl-L-glutamate 5-semialdehyde.</text>
</comment>
<comment type="catalytic activity">
    <reaction evidence="1">
        <text>N-acetyl-L-glutamate 5-semialdehyde + phosphate + NADP(+) = N-acetyl-L-glutamyl 5-phosphate + NADPH + H(+)</text>
        <dbReference type="Rhea" id="RHEA:21588"/>
        <dbReference type="ChEBI" id="CHEBI:15378"/>
        <dbReference type="ChEBI" id="CHEBI:29123"/>
        <dbReference type="ChEBI" id="CHEBI:43474"/>
        <dbReference type="ChEBI" id="CHEBI:57783"/>
        <dbReference type="ChEBI" id="CHEBI:57936"/>
        <dbReference type="ChEBI" id="CHEBI:58349"/>
        <dbReference type="EC" id="1.2.1.38"/>
    </reaction>
</comment>
<comment type="pathway">
    <text evidence="1">Amino-acid biosynthesis; L-arginine biosynthesis; N(2)-acetyl-L-ornithine from L-glutamate: step 3/4.</text>
</comment>
<comment type="subcellular location">
    <subcellularLocation>
        <location evidence="1">Cytoplasm</location>
    </subcellularLocation>
</comment>
<comment type="similarity">
    <text evidence="1">Belongs to the NAGSA dehydrogenase family. Type 1 subfamily.</text>
</comment>
<protein>
    <recommendedName>
        <fullName evidence="1">N-acetyl-gamma-glutamyl-phosphate reductase</fullName>
        <shortName evidence="1">AGPR</shortName>
        <ecNumber evidence="1">1.2.1.38</ecNumber>
    </recommendedName>
    <alternativeName>
        <fullName evidence="1">N-acetyl-glutamate semialdehyde dehydrogenase</fullName>
        <shortName evidence="1">NAGSA dehydrogenase</shortName>
    </alternativeName>
</protein>
<accession>Q6NHH0</accession>
<proteinExistence type="inferred from homology"/>
<feature type="chain" id="PRO_0000112398" description="N-acetyl-gamma-glutamyl-phosphate reductase">
    <location>
        <begin position="1"/>
        <end position="347"/>
    </location>
</feature>
<feature type="active site" evidence="1">
    <location>
        <position position="151"/>
    </location>
</feature>
<organism>
    <name type="scientific">Corynebacterium diphtheriae (strain ATCC 700971 / NCTC 13129 / Biotype gravis)</name>
    <dbReference type="NCBI Taxonomy" id="257309"/>
    <lineage>
        <taxon>Bacteria</taxon>
        <taxon>Bacillati</taxon>
        <taxon>Actinomycetota</taxon>
        <taxon>Actinomycetes</taxon>
        <taxon>Mycobacteriales</taxon>
        <taxon>Corynebacteriaceae</taxon>
        <taxon>Corynebacterium</taxon>
    </lineage>
</organism>
<reference key="1">
    <citation type="journal article" date="2003" name="Nucleic Acids Res.">
        <title>The complete genome sequence and analysis of Corynebacterium diphtheriae NCTC13129.</title>
        <authorList>
            <person name="Cerdeno-Tarraga A.-M."/>
            <person name="Efstratiou A."/>
            <person name="Dover L.G."/>
            <person name="Holden M.T.G."/>
            <person name="Pallen M.J."/>
            <person name="Bentley S.D."/>
            <person name="Besra G.S."/>
            <person name="Churcher C.M."/>
            <person name="James K.D."/>
            <person name="De Zoysa A."/>
            <person name="Chillingworth T."/>
            <person name="Cronin A."/>
            <person name="Dowd L."/>
            <person name="Feltwell T."/>
            <person name="Hamlin N."/>
            <person name="Holroyd S."/>
            <person name="Jagels K."/>
            <person name="Moule S."/>
            <person name="Quail M.A."/>
            <person name="Rabbinowitsch E."/>
            <person name="Rutherford K.M."/>
            <person name="Thomson N.R."/>
            <person name="Unwin L."/>
            <person name="Whitehead S."/>
            <person name="Barrell B.G."/>
            <person name="Parkhill J."/>
        </authorList>
    </citation>
    <scope>NUCLEOTIDE SEQUENCE [LARGE SCALE GENOMIC DNA]</scope>
    <source>
        <strain>ATCC 700971 / NCTC 13129 / Biotype gravis</strain>
    </source>
</reference>
<keyword id="KW-0028">Amino-acid biosynthesis</keyword>
<keyword id="KW-0055">Arginine biosynthesis</keyword>
<keyword id="KW-0963">Cytoplasm</keyword>
<keyword id="KW-0521">NADP</keyword>
<keyword id="KW-0560">Oxidoreductase</keyword>
<keyword id="KW-1185">Reference proteome</keyword>